<organism>
    <name type="scientific">Roseobacter denitrificans (strain ATCC 33942 / OCh 114)</name>
    <name type="common">Erythrobacter sp. (strain OCh 114)</name>
    <name type="synonym">Roseobacter denitrificans</name>
    <dbReference type="NCBI Taxonomy" id="375451"/>
    <lineage>
        <taxon>Bacteria</taxon>
        <taxon>Pseudomonadati</taxon>
        <taxon>Pseudomonadota</taxon>
        <taxon>Alphaproteobacteria</taxon>
        <taxon>Rhodobacterales</taxon>
        <taxon>Roseobacteraceae</taxon>
        <taxon>Roseobacter</taxon>
    </lineage>
</organism>
<name>COAD_ROSDO</name>
<comment type="function">
    <text evidence="1">Reversibly transfers an adenylyl group from ATP to 4'-phosphopantetheine, yielding dephospho-CoA (dPCoA) and pyrophosphate.</text>
</comment>
<comment type="catalytic activity">
    <reaction evidence="1">
        <text>(R)-4'-phosphopantetheine + ATP + H(+) = 3'-dephospho-CoA + diphosphate</text>
        <dbReference type="Rhea" id="RHEA:19801"/>
        <dbReference type="ChEBI" id="CHEBI:15378"/>
        <dbReference type="ChEBI" id="CHEBI:30616"/>
        <dbReference type="ChEBI" id="CHEBI:33019"/>
        <dbReference type="ChEBI" id="CHEBI:57328"/>
        <dbReference type="ChEBI" id="CHEBI:61723"/>
        <dbReference type="EC" id="2.7.7.3"/>
    </reaction>
</comment>
<comment type="cofactor">
    <cofactor evidence="1">
        <name>Mg(2+)</name>
        <dbReference type="ChEBI" id="CHEBI:18420"/>
    </cofactor>
</comment>
<comment type="pathway">
    <text evidence="1">Cofactor biosynthesis; coenzyme A biosynthesis; CoA from (R)-pantothenate: step 4/5.</text>
</comment>
<comment type="subunit">
    <text evidence="1">Homohexamer.</text>
</comment>
<comment type="subcellular location">
    <subcellularLocation>
        <location evidence="1">Cytoplasm</location>
    </subcellularLocation>
</comment>
<comment type="similarity">
    <text evidence="1">Belongs to the bacterial CoaD family.</text>
</comment>
<protein>
    <recommendedName>
        <fullName evidence="1">Phosphopantetheine adenylyltransferase</fullName>
        <ecNumber evidence="1">2.7.7.3</ecNumber>
    </recommendedName>
    <alternativeName>
        <fullName evidence="1">Dephospho-CoA pyrophosphorylase</fullName>
    </alternativeName>
    <alternativeName>
        <fullName evidence="1">Pantetheine-phosphate adenylyltransferase</fullName>
        <shortName evidence="1">PPAT</shortName>
    </alternativeName>
</protein>
<reference key="1">
    <citation type="journal article" date="2007" name="J. Bacteriol.">
        <title>The complete genome sequence of Roseobacter denitrificans reveals a mixotrophic rather than photosynthetic metabolism.</title>
        <authorList>
            <person name="Swingley W.D."/>
            <person name="Sadekar S."/>
            <person name="Mastrian S.D."/>
            <person name="Matthies H.J."/>
            <person name="Hao J."/>
            <person name="Ramos H."/>
            <person name="Acharya C.R."/>
            <person name="Conrad A.L."/>
            <person name="Taylor H.L."/>
            <person name="Dejesa L.C."/>
            <person name="Shah M.K."/>
            <person name="O'Huallachain M.E."/>
            <person name="Lince M.T."/>
            <person name="Blankenship R.E."/>
            <person name="Beatty J.T."/>
            <person name="Touchman J.W."/>
        </authorList>
    </citation>
    <scope>NUCLEOTIDE SEQUENCE [LARGE SCALE GENOMIC DNA]</scope>
    <source>
        <strain>ATCC 33942 / OCh 114</strain>
    </source>
</reference>
<dbReference type="EC" id="2.7.7.3" evidence="1"/>
<dbReference type="EMBL" id="CP000362">
    <property type="protein sequence ID" value="ABG32505.1"/>
    <property type="molecule type" value="Genomic_DNA"/>
</dbReference>
<dbReference type="RefSeq" id="WP_011569121.1">
    <property type="nucleotide sequence ID" value="NC_008209.1"/>
</dbReference>
<dbReference type="SMR" id="Q164T8"/>
<dbReference type="STRING" id="375451.RD1_2985"/>
<dbReference type="KEGG" id="rde:RD1_2985"/>
<dbReference type="eggNOG" id="COG0669">
    <property type="taxonomic scope" value="Bacteria"/>
</dbReference>
<dbReference type="HOGENOM" id="CLU_100149_0_1_5"/>
<dbReference type="OrthoDB" id="9806661at2"/>
<dbReference type="UniPathway" id="UPA00241">
    <property type="reaction ID" value="UER00355"/>
</dbReference>
<dbReference type="Proteomes" id="UP000007029">
    <property type="component" value="Chromosome"/>
</dbReference>
<dbReference type="GO" id="GO:0005737">
    <property type="term" value="C:cytoplasm"/>
    <property type="evidence" value="ECO:0007669"/>
    <property type="project" value="UniProtKB-SubCell"/>
</dbReference>
<dbReference type="GO" id="GO:0005524">
    <property type="term" value="F:ATP binding"/>
    <property type="evidence" value="ECO:0007669"/>
    <property type="project" value="UniProtKB-KW"/>
</dbReference>
<dbReference type="GO" id="GO:0004595">
    <property type="term" value="F:pantetheine-phosphate adenylyltransferase activity"/>
    <property type="evidence" value="ECO:0007669"/>
    <property type="project" value="UniProtKB-UniRule"/>
</dbReference>
<dbReference type="GO" id="GO:0015937">
    <property type="term" value="P:coenzyme A biosynthetic process"/>
    <property type="evidence" value="ECO:0007669"/>
    <property type="project" value="UniProtKB-UniRule"/>
</dbReference>
<dbReference type="CDD" id="cd02163">
    <property type="entry name" value="PPAT"/>
    <property type="match status" value="1"/>
</dbReference>
<dbReference type="Gene3D" id="3.40.50.620">
    <property type="entry name" value="HUPs"/>
    <property type="match status" value="1"/>
</dbReference>
<dbReference type="HAMAP" id="MF_00151">
    <property type="entry name" value="PPAT_bact"/>
    <property type="match status" value="1"/>
</dbReference>
<dbReference type="InterPro" id="IPR004821">
    <property type="entry name" value="Cyt_trans-like"/>
</dbReference>
<dbReference type="InterPro" id="IPR001980">
    <property type="entry name" value="PPAT"/>
</dbReference>
<dbReference type="InterPro" id="IPR014729">
    <property type="entry name" value="Rossmann-like_a/b/a_fold"/>
</dbReference>
<dbReference type="NCBIfam" id="TIGR01510">
    <property type="entry name" value="coaD_prev_kdtB"/>
    <property type="match status" value="1"/>
</dbReference>
<dbReference type="NCBIfam" id="TIGR00125">
    <property type="entry name" value="cyt_tran_rel"/>
    <property type="match status" value="1"/>
</dbReference>
<dbReference type="PANTHER" id="PTHR21342">
    <property type="entry name" value="PHOSPHOPANTETHEINE ADENYLYLTRANSFERASE"/>
    <property type="match status" value="1"/>
</dbReference>
<dbReference type="PANTHER" id="PTHR21342:SF1">
    <property type="entry name" value="PHOSPHOPANTETHEINE ADENYLYLTRANSFERASE"/>
    <property type="match status" value="1"/>
</dbReference>
<dbReference type="Pfam" id="PF01467">
    <property type="entry name" value="CTP_transf_like"/>
    <property type="match status" value="1"/>
</dbReference>
<dbReference type="PRINTS" id="PR01020">
    <property type="entry name" value="LPSBIOSNTHSS"/>
</dbReference>
<dbReference type="SUPFAM" id="SSF52374">
    <property type="entry name" value="Nucleotidylyl transferase"/>
    <property type="match status" value="1"/>
</dbReference>
<sequence length="166" mass="18193">MRVGLYPGTFDPITLGHLDIIRRASALLDKLVIGVAINRDKGPLFCLEERVAMVEAESIKIAAMTGLEIVTHPFENLLIDCARDVGATVIVRGLRAVADFEYEYQMVGMNRQLDDTIETVFLMAEAEHQAIASKLVKEIARLGGDIEKFVTPEVNAALLNKIGRAG</sequence>
<accession>Q164T8</accession>
<keyword id="KW-0067">ATP-binding</keyword>
<keyword id="KW-0173">Coenzyme A biosynthesis</keyword>
<keyword id="KW-0963">Cytoplasm</keyword>
<keyword id="KW-0460">Magnesium</keyword>
<keyword id="KW-0547">Nucleotide-binding</keyword>
<keyword id="KW-0548">Nucleotidyltransferase</keyword>
<keyword id="KW-1185">Reference proteome</keyword>
<keyword id="KW-0808">Transferase</keyword>
<feature type="chain" id="PRO_1000076782" description="Phosphopantetheine adenylyltransferase">
    <location>
        <begin position="1"/>
        <end position="166"/>
    </location>
</feature>
<feature type="binding site" evidence="1">
    <location>
        <begin position="9"/>
        <end position="10"/>
    </location>
    <ligand>
        <name>ATP</name>
        <dbReference type="ChEBI" id="CHEBI:30616"/>
    </ligand>
</feature>
<feature type="binding site" evidence="1">
    <location>
        <position position="9"/>
    </location>
    <ligand>
        <name>substrate</name>
    </ligand>
</feature>
<feature type="binding site" evidence="1">
    <location>
        <position position="17"/>
    </location>
    <ligand>
        <name>ATP</name>
        <dbReference type="ChEBI" id="CHEBI:30616"/>
    </ligand>
</feature>
<feature type="binding site" evidence="1">
    <location>
        <position position="41"/>
    </location>
    <ligand>
        <name>substrate</name>
    </ligand>
</feature>
<feature type="binding site" evidence="1">
    <location>
        <position position="78"/>
    </location>
    <ligand>
        <name>substrate</name>
    </ligand>
</feature>
<feature type="binding site" evidence="1">
    <location>
        <position position="92"/>
    </location>
    <ligand>
        <name>substrate</name>
    </ligand>
</feature>
<feature type="binding site" evidence="1">
    <location>
        <begin position="93"/>
        <end position="95"/>
    </location>
    <ligand>
        <name>ATP</name>
        <dbReference type="ChEBI" id="CHEBI:30616"/>
    </ligand>
</feature>
<feature type="binding site" evidence="1">
    <location>
        <position position="103"/>
    </location>
    <ligand>
        <name>ATP</name>
        <dbReference type="ChEBI" id="CHEBI:30616"/>
    </ligand>
</feature>
<feature type="binding site" evidence="1">
    <location>
        <begin position="128"/>
        <end position="134"/>
    </location>
    <ligand>
        <name>ATP</name>
        <dbReference type="ChEBI" id="CHEBI:30616"/>
    </ligand>
</feature>
<feature type="site" description="Transition state stabilizer" evidence="1">
    <location>
        <position position="17"/>
    </location>
</feature>
<proteinExistence type="inferred from homology"/>
<evidence type="ECO:0000255" key="1">
    <source>
        <dbReference type="HAMAP-Rule" id="MF_00151"/>
    </source>
</evidence>
<gene>
    <name evidence="1" type="primary">coaD</name>
    <name type="ordered locus">RD1_2985</name>
</gene>